<feature type="chain" id="PRO_0000169991" description="Curved DNA-binding protein">
    <location>
        <begin position="1"/>
        <end position="319"/>
    </location>
</feature>
<feature type="domain" description="J" evidence="1">
    <location>
        <begin position="5"/>
        <end position="69"/>
    </location>
</feature>
<proteinExistence type="inferred from homology"/>
<comment type="function">
    <text evidence="1">DNA-binding protein that preferentially recognizes a curved DNA sequence. It is probably a functional analog of DnaJ; displays overlapping activities with DnaJ, but functions under different conditions, probably acting as a molecular chaperone in an adaptive response to environmental stresses other than heat shock. Lacks autonomous chaperone activity; binds native substrates and targets them for recognition by DnaK. Its activity is inhibited by the binding of CbpM.</text>
</comment>
<comment type="subcellular location">
    <subcellularLocation>
        <location evidence="1">Cytoplasm</location>
        <location evidence="1">Nucleoid</location>
    </subcellularLocation>
</comment>
<gene>
    <name evidence="1" type="primary">cbpA</name>
    <name type="ordered locus">PP_4848</name>
</gene>
<protein>
    <recommendedName>
        <fullName evidence="1">Curved DNA-binding protein</fullName>
    </recommendedName>
</protein>
<dbReference type="EMBL" id="AE015451">
    <property type="protein sequence ID" value="AAN70417.1"/>
    <property type="molecule type" value="Genomic_DNA"/>
</dbReference>
<dbReference type="RefSeq" id="NP_746953.1">
    <property type="nucleotide sequence ID" value="NC_002947.4"/>
</dbReference>
<dbReference type="RefSeq" id="WP_010955454.1">
    <property type="nucleotide sequence ID" value="NZ_CP169744.1"/>
</dbReference>
<dbReference type="SMR" id="Q88DH7"/>
<dbReference type="STRING" id="160488.PP_4848"/>
<dbReference type="PaxDb" id="160488-PP_4848"/>
<dbReference type="GeneID" id="83682578"/>
<dbReference type="KEGG" id="ppu:PP_4848"/>
<dbReference type="PATRIC" id="fig|160488.4.peg.5179"/>
<dbReference type="eggNOG" id="COG0484">
    <property type="taxonomic scope" value="Bacteria"/>
</dbReference>
<dbReference type="HOGENOM" id="CLU_017633_0_0_6"/>
<dbReference type="OrthoDB" id="9779889at2"/>
<dbReference type="PhylomeDB" id="Q88DH7"/>
<dbReference type="BioCyc" id="PPUT160488:G1G01-5188-MONOMER"/>
<dbReference type="Proteomes" id="UP000000556">
    <property type="component" value="Chromosome"/>
</dbReference>
<dbReference type="GO" id="GO:0005737">
    <property type="term" value="C:cytoplasm"/>
    <property type="evidence" value="ECO:0007669"/>
    <property type="project" value="UniProtKB-UniRule"/>
</dbReference>
<dbReference type="GO" id="GO:0009295">
    <property type="term" value="C:nucleoid"/>
    <property type="evidence" value="ECO:0007669"/>
    <property type="project" value="UniProtKB-SubCell"/>
</dbReference>
<dbReference type="GO" id="GO:0003681">
    <property type="term" value="F:bent DNA binding"/>
    <property type="evidence" value="ECO:0007669"/>
    <property type="project" value="UniProtKB-UniRule"/>
</dbReference>
<dbReference type="GO" id="GO:0051082">
    <property type="term" value="F:unfolded protein binding"/>
    <property type="evidence" value="ECO:0007669"/>
    <property type="project" value="InterPro"/>
</dbReference>
<dbReference type="GO" id="GO:0051085">
    <property type="term" value="P:chaperone cofactor-dependent protein refolding"/>
    <property type="evidence" value="ECO:0007669"/>
    <property type="project" value="TreeGrafter"/>
</dbReference>
<dbReference type="GO" id="GO:0042026">
    <property type="term" value="P:protein refolding"/>
    <property type="evidence" value="ECO:0007669"/>
    <property type="project" value="TreeGrafter"/>
</dbReference>
<dbReference type="CDD" id="cd06257">
    <property type="entry name" value="DnaJ"/>
    <property type="match status" value="1"/>
</dbReference>
<dbReference type="CDD" id="cd10747">
    <property type="entry name" value="DnaJ_C"/>
    <property type="match status" value="1"/>
</dbReference>
<dbReference type="FunFam" id="2.60.260.20:FF:000008">
    <property type="entry name" value="Curved DNA-binding protein"/>
    <property type="match status" value="1"/>
</dbReference>
<dbReference type="FunFam" id="2.60.260.20:FF:000013">
    <property type="entry name" value="DnaJ subfamily B member 11"/>
    <property type="match status" value="1"/>
</dbReference>
<dbReference type="Gene3D" id="1.10.287.110">
    <property type="entry name" value="DnaJ domain"/>
    <property type="match status" value="1"/>
</dbReference>
<dbReference type="Gene3D" id="1.20.5.460">
    <property type="entry name" value="Single helix bin"/>
    <property type="match status" value="1"/>
</dbReference>
<dbReference type="Gene3D" id="2.60.260.20">
    <property type="entry name" value="Urease metallochaperone UreE, N-terminal domain"/>
    <property type="match status" value="2"/>
</dbReference>
<dbReference type="HAMAP" id="MF_01154">
    <property type="entry name" value="CbpA"/>
    <property type="match status" value="1"/>
</dbReference>
<dbReference type="InterPro" id="IPR023859">
    <property type="entry name" value="DNA-bd_curved-DNA"/>
</dbReference>
<dbReference type="InterPro" id="IPR002939">
    <property type="entry name" value="DnaJ_C"/>
</dbReference>
<dbReference type="InterPro" id="IPR001623">
    <property type="entry name" value="DnaJ_domain"/>
</dbReference>
<dbReference type="InterPro" id="IPR018253">
    <property type="entry name" value="DnaJ_domain_CS"/>
</dbReference>
<dbReference type="InterPro" id="IPR008971">
    <property type="entry name" value="HSP40/DnaJ_pept-bd"/>
</dbReference>
<dbReference type="InterPro" id="IPR036869">
    <property type="entry name" value="J_dom_sf"/>
</dbReference>
<dbReference type="NCBIfam" id="NF007618">
    <property type="entry name" value="PRK10266.1"/>
    <property type="match status" value="1"/>
</dbReference>
<dbReference type="PANTHER" id="PTHR43096">
    <property type="entry name" value="DNAJ HOMOLOG 1, MITOCHONDRIAL-RELATED"/>
    <property type="match status" value="1"/>
</dbReference>
<dbReference type="PANTHER" id="PTHR43096:SF52">
    <property type="entry name" value="DNAJ HOMOLOG 1, MITOCHONDRIAL-RELATED"/>
    <property type="match status" value="1"/>
</dbReference>
<dbReference type="Pfam" id="PF00226">
    <property type="entry name" value="DnaJ"/>
    <property type="match status" value="1"/>
</dbReference>
<dbReference type="Pfam" id="PF01556">
    <property type="entry name" value="DnaJ_C"/>
    <property type="match status" value="1"/>
</dbReference>
<dbReference type="PRINTS" id="PR00625">
    <property type="entry name" value="JDOMAIN"/>
</dbReference>
<dbReference type="SMART" id="SM00271">
    <property type="entry name" value="DnaJ"/>
    <property type="match status" value="1"/>
</dbReference>
<dbReference type="SUPFAM" id="SSF46565">
    <property type="entry name" value="Chaperone J-domain"/>
    <property type="match status" value="1"/>
</dbReference>
<dbReference type="SUPFAM" id="SSF49493">
    <property type="entry name" value="HSP40/DnaJ peptide-binding domain"/>
    <property type="match status" value="2"/>
</dbReference>
<dbReference type="PROSITE" id="PS00636">
    <property type="entry name" value="DNAJ_1"/>
    <property type="match status" value="1"/>
</dbReference>
<dbReference type="PROSITE" id="PS50076">
    <property type="entry name" value="DNAJ_2"/>
    <property type="match status" value="1"/>
</dbReference>
<sequence>MDFKDYYKILGVEPTADEKAIKAAYRKLARKYHPDVSKERDAEEKFKEANEAYEVLGDAQKRAEFDEIRKYGGQHGRPFQAPPGWESRGGGGGFEGGDFSDFFSSIFGGRSAGGNPFGGARQQQRSAGRRGQDVELELAVFLEETLSKESKQISFQVPQTNAMGQRTGFTTKTLNVRIPAGVTDGERIRLKGQGAPGSGGGANGDLFLTIRMAPHPLFDVEGHDLIITVPLAPWEAALGAKVAVPTLDGKINLTIRPDSQSGQRLRVPGKGLANKQGERGNLYAQLKVVMPPASDESARELWTKLSEKAAFNPRTQWSK</sequence>
<keyword id="KW-0143">Chaperone</keyword>
<keyword id="KW-0963">Cytoplasm</keyword>
<keyword id="KW-0238">DNA-binding</keyword>
<keyword id="KW-1185">Reference proteome</keyword>
<accession>Q88DH7</accession>
<reference key="1">
    <citation type="journal article" date="2002" name="Environ. Microbiol.">
        <title>Complete genome sequence and comparative analysis of the metabolically versatile Pseudomonas putida KT2440.</title>
        <authorList>
            <person name="Nelson K.E."/>
            <person name="Weinel C."/>
            <person name="Paulsen I.T."/>
            <person name="Dodson R.J."/>
            <person name="Hilbert H."/>
            <person name="Martins dos Santos V.A.P."/>
            <person name="Fouts D.E."/>
            <person name="Gill S.R."/>
            <person name="Pop M."/>
            <person name="Holmes M."/>
            <person name="Brinkac L.M."/>
            <person name="Beanan M.J."/>
            <person name="DeBoy R.T."/>
            <person name="Daugherty S.C."/>
            <person name="Kolonay J.F."/>
            <person name="Madupu R."/>
            <person name="Nelson W.C."/>
            <person name="White O."/>
            <person name="Peterson J.D."/>
            <person name="Khouri H.M."/>
            <person name="Hance I."/>
            <person name="Chris Lee P."/>
            <person name="Holtzapple E.K."/>
            <person name="Scanlan D."/>
            <person name="Tran K."/>
            <person name="Moazzez A."/>
            <person name="Utterback T.R."/>
            <person name="Rizzo M."/>
            <person name="Lee K."/>
            <person name="Kosack D."/>
            <person name="Moestl D."/>
            <person name="Wedler H."/>
            <person name="Lauber J."/>
            <person name="Stjepandic D."/>
            <person name="Hoheisel J."/>
            <person name="Straetz M."/>
            <person name="Heim S."/>
            <person name="Kiewitz C."/>
            <person name="Eisen J.A."/>
            <person name="Timmis K.N."/>
            <person name="Duesterhoeft A."/>
            <person name="Tuemmler B."/>
            <person name="Fraser C.M."/>
        </authorList>
    </citation>
    <scope>NUCLEOTIDE SEQUENCE [LARGE SCALE GENOMIC DNA]</scope>
    <source>
        <strain>ATCC 47054 / DSM 6125 / CFBP 8728 / NCIMB 11950 / KT2440</strain>
    </source>
</reference>
<name>CBPA_PSEPK</name>
<evidence type="ECO:0000255" key="1">
    <source>
        <dbReference type="HAMAP-Rule" id="MF_01154"/>
    </source>
</evidence>
<organism>
    <name type="scientific">Pseudomonas putida (strain ATCC 47054 / DSM 6125 / CFBP 8728 / NCIMB 11950 / KT2440)</name>
    <dbReference type="NCBI Taxonomy" id="160488"/>
    <lineage>
        <taxon>Bacteria</taxon>
        <taxon>Pseudomonadati</taxon>
        <taxon>Pseudomonadota</taxon>
        <taxon>Gammaproteobacteria</taxon>
        <taxon>Pseudomonadales</taxon>
        <taxon>Pseudomonadaceae</taxon>
        <taxon>Pseudomonas</taxon>
    </lineage>
</organism>